<keyword id="KW-0002">3D-structure</keyword>
<keyword id="KW-0175">Coiled coil</keyword>
<keyword id="KW-0963">Cytoplasm</keyword>
<keyword id="KW-0597">Phosphoprotein</keyword>
<keyword id="KW-1185">Reference proteome</keyword>
<keyword id="KW-0728">SH3 domain</keyword>
<protein>
    <recommendedName>
        <fullName>Epidermal growth factor receptor kinase substrate 8-like protein 1</fullName>
        <shortName>EPS8-like protein 1</shortName>
    </recommendedName>
    <alternativeName>
        <fullName>Epidermal growth factor receptor pathway substrate 8-related protein 1</fullName>
        <shortName>EPS8-related protein 1</shortName>
    </alternativeName>
</protein>
<sequence>MSTTTGPEAAPKPSAKSIYEQRKRYSTVVMADVSQYHVNHLVTFCLGEEDGVHTVEDASRKLAVMDSQGRVWAQEMLLRVSPSQVTLLDPVSKEELESYPLDAIVRCDAVMPRGRSRSLLLLVCQEPERAQPDVHFFQGLLLGAELIREDIQGALQNYRSGRGERRAAALRATQEELRRGASPAAETPPLQRRPSVRLVINTVEPSAVRGRPQVESIPETEEARKPDQARTTSSADPTSPDLGPRGPELAGLQAERDVDILNHVFDDVESFVSRLQKSAEATRVLEHRERGRRTRRRAAGEGLLTLRAKPPTEAEYTDVLQKIKYAFSLLARLRGNIANPSSPELLHFLFGPLQMIVNTSGGPEFAKSVRRPHLTLEAVTLLRDNVTPGENELWTSLGDSWTCPGVELPPEEGSPYSPEFYNGWEPPATDPQGRPWEDPVEKQLQHEKRRRQQSAPQVAVNGQQDPELETESQLEEKARKWVLCNYDFQARNGSELSVKHRDVLEVLDDRRKWWKVRDHQGQEGYVPYNILTPHPGPQVHRSQSPARHLETSTPPPPPAPAPAPTQVRPQWDSCDSLNSLDPSEKEKFSQMLCVNEELQSRLAQGRSGPSRVTPGPRAQEPQLSPRSEASVVRAWLQTKGFSSGTVEALGVLTGAQLFSLQKEELRAVCPEEGARVYSQVTVQRALLEDREKVSELEAVMEKQKKKVEGETKTEVI</sequence>
<reference key="1">
    <citation type="journal article" date="2003" name="Genomics">
        <title>In silico analysis of the EPS8 gene family: genomic organization, expression profile, and protein structure.</title>
        <authorList>
            <person name="Tocchetti A."/>
            <person name="Confalonieri S."/>
            <person name="Scita G."/>
            <person name="Di Fiore P.P."/>
            <person name="Betsholtz C."/>
        </authorList>
    </citation>
    <scope>NUCLEOTIDE SEQUENCE [MRNA]</scope>
    <source>
        <strain>C57BL/6J</strain>
    </source>
</reference>
<reference key="2">
    <citation type="journal article" date="2005" name="Science">
        <title>The transcriptional landscape of the mammalian genome.</title>
        <authorList>
            <person name="Carninci P."/>
            <person name="Kasukawa T."/>
            <person name="Katayama S."/>
            <person name="Gough J."/>
            <person name="Frith M.C."/>
            <person name="Maeda N."/>
            <person name="Oyama R."/>
            <person name="Ravasi T."/>
            <person name="Lenhard B."/>
            <person name="Wells C."/>
            <person name="Kodzius R."/>
            <person name="Shimokawa K."/>
            <person name="Bajic V.B."/>
            <person name="Brenner S.E."/>
            <person name="Batalov S."/>
            <person name="Forrest A.R."/>
            <person name="Zavolan M."/>
            <person name="Davis M.J."/>
            <person name="Wilming L.G."/>
            <person name="Aidinis V."/>
            <person name="Allen J.E."/>
            <person name="Ambesi-Impiombato A."/>
            <person name="Apweiler R."/>
            <person name="Aturaliya R.N."/>
            <person name="Bailey T.L."/>
            <person name="Bansal M."/>
            <person name="Baxter L."/>
            <person name="Beisel K.W."/>
            <person name="Bersano T."/>
            <person name="Bono H."/>
            <person name="Chalk A.M."/>
            <person name="Chiu K.P."/>
            <person name="Choudhary V."/>
            <person name="Christoffels A."/>
            <person name="Clutterbuck D.R."/>
            <person name="Crowe M.L."/>
            <person name="Dalla E."/>
            <person name="Dalrymple B.P."/>
            <person name="de Bono B."/>
            <person name="Della Gatta G."/>
            <person name="di Bernardo D."/>
            <person name="Down T."/>
            <person name="Engstrom P."/>
            <person name="Fagiolini M."/>
            <person name="Faulkner G."/>
            <person name="Fletcher C.F."/>
            <person name="Fukushima T."/>
            <person name="Furuno M."/>
            <person name="Futaki S."/>
            <person name="Gariboldi M."/>
            <person name="Georgii-Hemming P."/>
            <person name="Gingeras T.R."/>
            <person name="Gojobori T."/>
            <person name="Green R.E."/>
            <person name="Gustincich S."/>
            <person name="Harbers M."/>
            <person name="Hayashi Y."/>
            <person name="Hensch T.K."/>
            <person name="Hirokawa N."/>
            <person name="Hill D."/>
            <person name="Huminiecki L."/>
            <person name="Iacono M."/>
            <person name="Ikeo K."/>
            <person name="Iwama A."/>
            <person name="Ishikawa T."/>
            <person name="Jakt M."/>
            <person name="Kanapin A."/>
            <person name="Katoh M."/>
            <person name="Kawasawa Y."/>
            <person name="Kelso J."/>
            <person name="Kitamura H."/>
            <person name="Kitano H."/>
            <person name="Kollias G."/>
            <person name="Krishnan S.P."/>
            <person name="Kruger A."/>
            <person name="Kummerfeld S.K."/>
            <person name="Kurochkin I.V."/>
            <person name="Lareau L.F."/>
            <person name="Lazarevic D."/>
            <person name="Lipovich L."/>
            <person name="Liu J."/>
            <person name="Liuni S."/>
            <person name="McWilliam S."/>
            <person name="Madan Babu M."/>
            <person name="Madera M."/>
            <person name="Marchionni L."/>
            <person name="Matsuda H."/>
            <person name="Matsuzawa S."/>
            <person name="Miki H."/>
            <person name="Mignone F."/>
            <person name="Miyake S."/>
            <person name="Morris K."/>
            <person name="Mottagui-Tabar S."/>
            <person name="Mulder N."/>
            <person name="Nakano N."/>
            <person name="Nakauchi H."/>
            <person name="Ng P."/>
            <person name="Nilsson R."/>
            <person name="Nishiguchi S."/>
            <person name="Nishikawa S."/>
            <person name="Nori F."/>
            <person name="Ohara O."/>
            <person name="Okazaki Y."/>
            <person name="Orlando V."/>
            <person name="Pang K.C."/>
            <person name="Pavan W.J."/>
            <person name="Pavesi G."/>
            <person name="Pesole G."/>
            <person name="Petrovsky N."/>
            <person name="Piazza S."/>
            <person name="Reed J."/>
            <person name="Reid J.F."/>
            <person name="Ring B.Z."/>
            <person name="Ringwald M."/>
            <person name="Rost B."/>
            <person name="Ruan Y."/>
            <person name="Salzberg S.L."/>
            <person name="Sandelin A."/>
            <person name="Schneider C."/>
            <person name="Schoenbach C."/>
            <person name="Sekiguchi K."/>
            <person name="Semple C.A."/>
            <person name="Seno S."/>
            <person name="Sessa L."/>
            <person name="Sheng Y."/>
            <person name="Shibata Y."/>
            <person name="Shimada H."/>
            <person name="Shimada K."/>
            <person name="Silva D."/>
            <person name="Sinclair B."/>
            <person name="Sperling S."/>
            <person name="Stupka E."/>
            <person name="Sugiura K."/>
            <person name="Sultana R."/>
            <person name="Takenaka Y."/>
            <person name="Taki K."/>
            <person name="Tammoja K."/>
            <person name="Tan S.L."/>
            <person name="Tang S."/>
            <person name="Taylor M.S."/>
            <person name="Tegner J."/>
            <person name="Teichmann S.A."/>
            <person name="Ueda H.R."/>
            <person name="van Nimwegen E."/>
            <person name="Verardo R."/>
            <person name="Wei C.L."/>
            <person name="Yagi K."/>
            <person name="Yamanishi H."/>
            <person name="Zabarovsky E."/>
            <person name="Zhu S."/>
            <person name="Zimmer A."/>
            <person name="Hide W."/>
            <person name="Bult C."/>
            <person name="Grimmond S.M."/>
            <person name="Teasdale R.D."/>
            <person name="Liu E.T."/>
            <person name="Brusic V."/>
            <person name="Quackenbush J."/>
            <person name="Wahlestedt C."/>
            <person name="Mattick J.S."/>
            <person name="Hume D.A."/>
            <person name="Kai C."/>
            <person name="Sasaki D."/>
            <person name="Tomaru Y."/>
            <person name="Fukuda S."/>
            <person name="Kanamori-Katayama M."/>
            <person name="Suzuki M."/>
            <person name="Aoki J."/>
            <person name="Arakawa T."/>
            <person name="Iida J."/>
            <person name="Imamura K."/>
            <person name="Itoh M."/>
            <person name="Kato T."/>
            <person name="Kawaji H."/>
            <person name="Kawagashira N."/>
            <person name="Kawashima T."/>
            <person name="Kojima M."/>
            <person name="Kondo S."/>
            <person name="Konno H."/>
            <person name="Nakano K."/>
            <person name="Ninomiya N."/>
            <person name="Nishio T."/>
            <person name="Okada M."/>
            <person name="Plessy C."/>
            <person name="Shibata K."/>
            <person name="Shiraki T."/>
            <person name="Suzuki S."/>
            <person name="Tagami M."/>
            <person name="Waki K."/>
            <person name="Watahiki A."/>
            <person name="Okamura-Oho Y."/>
            <person name="Suzuki H."/>
            <person name="Kawai J."/>
            <person name="Hayashizaki Y."/>
        </authorList>
    </citation>
    <scope>NUCLEOTIDE SEQUENCE [LARGE SCALE MRNA]</scope>
    <source>
        <strain>C57BL/6J</strain>
        <tissue>Skin</tissue>
    </source>
</reference>
<reference key="3">
    <citation type="journal article" date="2004" name="Genome Res.">
        <title>The status, quality, and expansion of the NIH full-length cDNA project: the Mammalian Gene Collection (MGC).</title>
        <authorList>
            <consortium name="The MGC Project Team"/>
        </authorList>
    </citation>
    <scope>NUCLEOTIDE SEQUENCE [LARGE SCALE MRNA]</scope>
    <source>
        <strain>C57BL/6J</strain>
        <tissue>Retina</tissue>
    </source>
</reference>
<reference key="4">
    <citation type="journal article" date="2004" name="Mol. Biol. Cell">
        <title>The eps8 family of proteins links growth factor stimulation to actin reorganization generating functional redundancy in the Ras/Rac pathway.</title>
        <authorList>
            <person name="Offenhaeuser N."/>
            <person name="Borgonovo A."/>
            <person name="Disanza A."/>
            <person name="Romano P."/>
            <person name="Ponzanelli I."/>
            <person name="Iannolo G."/>
            <person name="Di Fiore P.P."/>
            <person name="Scita G."/>
        </authorList>
    </citation>
    <scope>TISSUE SPECIFICITY</scope>
</reference>
<reference key="5">
    <citation type="journal article" date="2010" name="Cell">
        <title>A tissue-specific atlas of mouse protein phosphorylation and expression.</title>
        <authorList>
            <person name="Huttlin E.L."/>
            <person name="Jedrychowski M.P."/>
            <person name="Elias J.E."/>
            <person name="Goswami T."/>
            <person name="Rad R."/>
            <person name="Beausoleil S.A."/>
            <person name="Villen J."/>
            <person name="Haas W."/>
            <person name="Sowa M.E."/>
            <person name="Gygi S.P."/>
        </authorList>
    </citation>
    <scope>PHOSPHORYLATION [LARGE SCALE ANALYSIS] AT SER-182 AND THR-187</scope>
    <scope>IDENTIFICATION BY MASS SPECTROMETRY [LARGE SCALE ANALYSIS]</scope>
    <source>
        <tissue>Kidney</tissue>
        <tissue>Lung</tissue>
    </source>
</reference>
<feature type="chain" id="PRO_0000239083" description="Epidermal growth factor receptor kinase substrate 8-like protein 1">
    <location>
        <begin position="1"/>
        <end position="716"/>
    </location>
</feature>
<feature type="domain" description="PTB" evidence="2">
    <location>
        <begin position="35"/>
        <end position="164"/>
    </location>
</feature>
<feature type="domain" description="SH3" evidence="3">
    <location>
        <begin position="477"/>
        <end position="536"/>
    </location>
</feature>
<feature type="region of interest" description="Disordered" evidence="4">
    <location>
        <begin position="175"/>
        <end position="194"/>
    </location>
</feature>
<feature type="region of interest" description="Disordered" evidence="4">
    <location>
        <begin position="203"/>
        <end position="249"/>
    </location>
</feature>
<feature type="region of interest" description="Disordered" evidence="4">
    <location>
        <begin position="404"/>
        <end position="472"/>
    </location>
</feature>
<feature type="region of interest" description="Disordered" evidence="4">
    <location>
        <begin position="528"/>
        <end position="582"/>
    </location>
</feature>
<feature type="region of interest" description="Disordered" evidence="4">
    <location>
        <begin position="600"/>
        <end position="628"/>
    </location>
</feature>
<feature type="coiled-coil region" evidence="2">
    <location>
        <begin position="682"/>
        <end position="713"/>
    </location>
</feature>
<feature type="compositionally biased region" description="Basic and acidic residues" evidence="4">
    <location>
        <begin position="435"/>
        <end position="446"/>
    </location>
</feature>
<feature type="compositionally biased region" description="Polar residues" evidence="4">
    <location>
        <begin position="453"/>
        <end position="464"/>
    </location>
</feature>
<feature type="compositionally biased region" description="Pro residues" evidence="4">
    <location>
        <begin position="553"/>
        <end position="563"/>
    </location>
</feature>
<feature type="modified residue" description="Phosphoserine" evidence="7">
    <location>
        <position position="182"/>
    </location>
</feature>
<feature type="modified residue" description="Phosphothreonine" evidence="7">
    <location>
        <position position="187"/>
    </location>
</feature>
<feature type="sequence conflict" description="In Ref. 3; BC027043." evidence="6" ref="3">
    <location>
        <position position="464"/>
    </location>
</feature>
<feature type="sequence conflict" description="In Ref. 3; BC027043." evidence="6" ref="3">
    <original>R</original>
    <variation>S</variation>
    <location>
        <position position="601"/>
    </location>
</feature>
<feature type="strand" evidence="9">
    <location>
        <begin position="32"/>
        <end position="45"/>
    </location>
</feature>
<feature type="strand" evidence="8">
    <location>
        <begin position="48"/>
        <end position="50"/>
    </location>
</feature>
<feature type="helix" evidence="9">
    <location>
        <begin position="55"/>
        <end position="67"/>
    </location>
</feature>
<feature type="strand" evidence="9">
    <location>
        <begin position="74"/>
        <end position="80"/>
    </location>
</feature>
<feature type="strand" evidence="9">
    <location>
        <begin position="82"/>
        <end position="88"/>
    </location>
</feature>
<feature type="turn" evidence="9">
    <location>
        <begin position="90"/>
        <end position="92"/>
    </location>
</feature>
<feature type="strand" evidence="9">
    <location>
        <begin position="95"/>
        <end position="100"/>
    </location>
</feature>
<feature type="helix" evidence="9">
    <location>
        <begin position="101"/>
        <end position="103"/>
    </location>
</feature>
<feature type="strand" evidence="9">
    <location>
        <begin position="104"/>
        <end position="110"/>
    </location>
</feature>
<feature type="strand" evidence="9">
    <location>
        <begin position="119"/>
        <end position="124"/>
    </location>
</feature>
<feature type="strand" evidence="9">
    <location>
        <begin position="133"/>
        <end position="139"/>
    </location>
</feature>
<feature type="turn" evidence="8">
    <location>
        <begin position="140"/>
        <end position="142"/>
    </location>
</feature>
<feature type="helix" evidence="9">
    <location>
        <begin position="143"/>
        <end position="158"/>
    </location>
</feature>
<organism>
    <name type="scientific">Mus musculus</name>
    <name type="common">Mouse</name>
    <dbReference type="NCBI Taxonomy" id="10090"/>
    <lineage>
        <taxon>Eukaryota</taxon>
        <taxon>Metazoa</taxon>
        <taxon>Chordata</taxon>
        <taxon>Craniata</taxon>
        <taxon>Vertebrata</taxon>
        <taxon>Euteleostomi</taxon>
        <taxon>Mammalia</taxon>
        <taxon>Eutheria</taxon>
        <taxon>Euarchontoglires</taxon>
        <taxon>Glires</taxon>
        <taxon>Rodentia</taxon>
        <taxon>Myomorpha</taxon>
        <taxon>Muroidea</taxon>
        <taxon>Muridae</taxon>
        <taxon>Murinae</taxon>
        <taxon>Mus</taxon>
        <taxon>Mus</taxon>
    </lineage>
</organism>
<dbReference type="EMBL" id="AY074931">
    <property type="protein sequence ID" value="AAL76120.1"/>
    <property type="molecule type" value="mRNA"/>
</dbReference>
<dbReference type="EMBL" id="AK019490">
    <property type="protein sequence ID" value="BAB31756.2"/>
    <property type="molecule type" value="mRNA"/>
</dbReference>
<dbReference type="EMBL" id="BC027043">
    <property type="status" value="NOT_ANNOTATED_CDS"/>
    <property type="molecule type" value="mRNA"/>
</dbReference>
<dbReference type="CCDS" id="CCDS20736.1"/>
<dbReference type="RefSeq" id="NP_001277345.1">
    <property type="nucleotide sequence ID" value="NM_001290416.1"/>
</dbReference>
<dbReference type="RefSeq" id="NP_080422.1">
    <property type="nucleotide sequence ID" value="NM_026146.4"/>
</dbReference>
<dbReference type="RefSeq" id="XP_006540387.1">
    <property type="nucleotide sequence ID" value="XM_006540324.3"/>
</dbReference>
<dbReference type="RefSeq" id="XP_006540388.1">
    <property type="nucleotide sequence ID" value="XM_006540325.4"/>
</dbReference>
<dbReference type="RefSeq" id="XP_006540389.1">
    <property type="nucleotide sequence ID" value="XM_006540326.2"/>
</dbReference>
<dbReference type="RefSeq" id="XP_017167747.1">
    <property type="nucleotide sequence ID" value="XM_017312258.1"/>
</dbReference>
<dbReference type="PDB" id="2CY4">
    <property type="method" value="X-ray"/>
    <property type="resolution" value="1.94 A"/>
    <property type="chains" value="A=26-165"/>
</dbReference>
<dbReference type="PDB" id="2CY5">
    <property type="method" value="X-ray"/>
    <property type="resolution" value="1.90 A"/>
    <property type="chains" value="A=26-165"/>
</dbReference>
<dbReference type="PDBsum" id="2CY4"/>
<dbReference type="PDBsum" id="2CY5"/>
<dbReference type="SMR" id="Q8R5F8"/>
<dbReference type="BioGRID" id="212177">
    <property type="interactions" value="3"/>
</dbReference>
<dbReference type="FunCoup" id="Q8R5F8">
    <property type="interactions" value="87"/>
</dbReference>
<dbReference type="STRING" id="10090.ENSMUSP00000125840"/>
<dbReference type="GlyGen" id="Q8R5F8">
    <property type="glycosylation" value="2 sites"/>
</dbReference>
<dbReference type="iPTMnet" id="Q8R5F8"/>
<dbReference type="PhosphoSitePlus" id="Q8R5F8"/>
<dbReference type="PaxDb" id="10090-ENSMUSP00000083559"/>
<dbReference type="ProteomicsDB" id="275947"/>
<dbReference type="Antibodypedia" id="19481">
    <property type="antibodies" value="150 antibodies from 24 providers"/>
</dbReference>
<dbReference type="DNASU" id="67425"/>
<dbReference type="Ensembl" id="ENSMUST00000086372.8">
    <property type="protein sequence ID" value="ENSMUSP00000083559.2"/>
    <property type="gene ID" value="ENSMUSG00000006154.14"/>
</dbReference>
<dbReference type="Ensembl" id="ENSMUST00000163893.8">
    <property type="protein sequence ID" value="ENSMUSP00000125840.2"/>
    <property type="gene ID" value="ENSMUSG00000006154.14"/>
</dbReference>
<dbReference type="GeneID" id="67425"/>
<dbReference type="KEGG" id="mmu:67425"/>
<dbReference type="UCSC" id="uc009exo.2">
    <property type="organism name" value="mouse"/>
</dbReference>
<dbReference type="AGR" id="MGI:1914675"/>
<dbReference type="CTD" id="54869"/>
<dbReference type="MGI" id="MGI:1914675">
    <property type="gene designation" value="Eps8l1"/>
</dbReference>
<dbReference type="VEuPathDB" id="HostDB:ENSMUSG00000006154"/>
<dbReference type="eggNOG" id="KOG3557">
    <property type="taxonomic scope" value="Eukaryota"/>
</dbReference>
<dbReference type="GeneTree" id="ENSGT00940000158125"/>
<dbReference type="HOGENOM" id="CLU_014510_0_0_1"/>
<dbReference type="InParanoid" id="Q8R5F8"/>
<dbReference type="OMA" id="NIIMADV"/>
<dbReference type="PhylomeDB" id="Q8R5F8"/>
<dbReference type="TreeFam" id="TF313069"/>
<dbReference type="BioGRID-ORCS" id="67425">
    <property type="hits" value="1 hit in 77 CRISPR screens"/>
</dbReference>
<dbReference type="EvolutionaryTrace" id="Q8R5F8"/>
<dbReference type="PRO" id="PR:Q8R5F8"/>
<dbReference type="Proteomes" id="UP000000589">
    <property type="component" value="Chromosome 7"/>
</dbReference>
<dbReference type="RNAct" id="Q8R5F8">
    <property type="molecule type" value="protein"/>
</dbReference>
<dbReference type="Bgee" id="ENSMUSG00000006154">
    <property type="expression patterns" value="Expressed in esophagus and 113 other cell types or tissues"/>
</dbReference>
<dbReference type="ExpressionAtlas" id="Q8R5F8">
    <property type="expression patterns" value="baseline and differential"/>
</dbReference>
<dbReference type="GO" id="GO:0005737">
    <property type="term" value="C:cytoplasm"/>
    <property type="evidence" value="ECO:0007669"/>
    <property type="project" value="UniProtKB-SubCell"/>
</dbReference>
<dbReference type="GO" id="GO:0001726">
    <property type="term" value="C:ruffle"/>
    <property type="evidence" value="ECO:0000247"/>
    <property type="project" value="MGI"/>
</dbReference>
<dbReference type="GO" id="GO:0051015">
    <property type="term" value="F:actin filament binding"/>
    <property type="evidence" value="ECO:0000247"/>
    <property type="project" value="MGI"/>
</dbReference>
<dbReference type="GO" id="GO:0016601">
    <property type="term" value="P:Rac protein signal transduction"/>
    <property type="evidence" value="ECO:0000247"/>
    <property type="project" value="MGI"/>
</dbReference>
<dbReference type="CDD" id="cd01210">
    <property type="entry name" value="PTB_EPS8"/>
    <property type="match status" value="1"/>
</dbReference>
<dbReference type="CDD" id="cd09540">
    <property type="entry name" value="SAM_EPS8-like"/>
    <property type="match status" value="1"/>
</dbReference>
<dbReference type="CDD" id="cd11764">
    <property type="entry name" value="SH3_Eps8"/>
    <property type="match status" value="1"/>
</dbReference>
<dbReference type="FunFam" id="1.10.150.50:FF:000023">
    <property type="entry name" value="Epidermal growth factor receptor kinase substrate 8"/>
    <property type="match status" value="1"/>
</dbReference>
<dbReference type="FunFam" id="2.30.30.40:FF:000071">
    <property type="entry name" value="Epidermal growth factor receptor kinase substrate 8"/>
    <property type="match status" value="1"/>
</dbReference>
<dbReference type="FunFam" id="2.30.29.30:FF:000261">
    <property type="entry name" value="Epidermal growth factor receptor kinase substrate 8-like protein 1"/>
    <property type="match status" value="1"/>
</dbReference>
<dbReference type="Gene3D" id="2.30.29.30">
    <property type="entry name" value="Pleckstrin-homology domain (PH domain)/Phosphotyrosine-binding domain (PTB)"/>
    <property type="match status" value="1"/>
</dbReference>
<dbReference type="Gene3D" id="2.30.30.40">
    <property type="entry name" value="SH3 Domains"/>
    <property type="match status" value="1"/>
</dbReference>
<dbReference type="Gene3D" id="1.10.150.50">
    <property type="entry name" value="Transcription Factor, Ets-1"/>
    <property type="match status" value="1"/>
</dbReference>
<dbReference type="InterPro" id="IPR039801">
    <property type="entry name" value="EPS8-like"/>
</dbReference>
<dbReference type="InterPro" id="IPR055093">
    <property type="entry name" value="EPS8_2nd"/>
</dbReference>
<dbReference type="InterPro" id="IPR033928">
    <property type="entry name" value="EPS8_PTB"/>
</dbReference>
<dbReference type="InterPro" id="IPR035462">
    <property type="entry name" value="Eps8_SH3"/>
</dbReference>
<dbReference type="InterPro" id="IPR011993">
    <property type="entry name" value="PH-like_dom_sf"/>
</dbReference>
<dbReference type="InterPro" id="IPR013625">
    <property type="entry name" value="PTB"/>
</dbReference>
<dbReference type="InterPro" id="IPR006020">
    <property type="entry name" value="PTB/PI_dom"/>
</dbReference>
<dbReference type="InterPro" id="IPR013761">
    <property type="entry name" value="SAM/pointed_sf"/>
</dbReference>
<dbReference type="InterPro" id="IPR041418">
    <property type="entry name" value="SAM_3"/>
</dbReference>
<dbReference type="InterPro" id="IPR036028">
    <property type="entry name" value="SH3-like_dom_sf"/>
</dbReference>
<dbReference type="InterPro" id="IPR001452">
    <property type="entry name" value="SH3_domain"/>
</dbReference>
<dbReference type="PANTHER" id="PTHR12287:SF19">
    <property type="entry name" value="EPIDERMAL GROWTH FACTOR RECEPTOR KINASE SUBSTRATE 8-LIKE PROTEIN 1"/>
    <property type="match status" value="1"/>
</dbReference>
<dbReference type="PANTHER" id="PTHR12287">
    <property type="entry name" value="EPIDERMAL GROWTH FACTOR RECEPTOR KINASE SUBSTRATE EPS8-RELATED PROTEIN"/>
    <property type="match status" value="1"/>
</dbReference>
<dbReference type="Pfam" id="PF22975">
    <property type="entry name" value="EPS8_2nd"/>
    <property type="match status" value="1"/>
</dbReference>
<dbReference type="Pfam" id="PF08416">
    <property type="entry name" value="PTB"/>
    <property type="match status" value="1"/>
</dbReference>
<dbReference type="Pfam" id="PF18016">
    <property type="entry name" value="SAM_3"/>
    <property type="match status" value="1"/>
</dbReference>
<dbReference type="Pfam" id="PF00018">
    <property type="entry name" value="SH3_1"/>
    <property type="match status" value="1"/>
</dbReference>
<dbReference type="SMART" id="SM00462">
    <property type="entry name" value="PTB"/>
    <property type="match status" value="1"/>
</dbReference>
<dbReference type="SMART" id="SM00326">
    <property type="entry name" value="SH3"/>
    <property type="match status" value="1"/>
</dbReference>
<dbReference type="SUPFAM" id="SSF50729">
    <property type="entry name" value="PH domain-like"/>
    <property type="match status" value="1"/>
</dbReference>
<dbReference type="SUPFAM" id="SSF50044">
    <property type="entry name" value="SH3-domain"/>
    <property type="match status" value="1"/>
</dbReference>
<dbReference type="PROSITE" id="PS50002">
    <property type="entry name" value="SH3"/>
    <property type="match status" value="1"/>
</dbReference>
<accession>Q8R5F8</accession>
<accession>Q8R0D6</accession>
<accession>Q9D2M6</accession>
<proteinExistence type="evidence at protein level"/>
<evidence type="ECO:0000250" key="1"/>
<evidence type="ECO:0000255" key="2"/>
<evidence type="ECO:0000255" key="3">
    <source>
        <dbReference type="PROSITE-ProRule" id="PRU00192"/>
    </source>
</evidence>
<evidence type="ECO:0000256" key="4">
    <source>
        <dbReference type="SAM" id="MobiDB-lite"/>
    </source>
</evidence>
<evidence type="ECO:0000269" key="5">
    <source>
    </source>
</evidence>
<evidence type="ECO:0000305" key="6"/>
<evidence type="ECO:0007744" key="7">
    <source>
    </source>
</evidence>
<evidence type="ECO:0007829" key="8">
    <source>
        <dbReference type="PDB" id="2CY4"/>
    </source>
</evidence>
<evidence type="ECO:0007829" key="9">
    <source>
        <dbReference type="PDB" id="2CY5"/>
    </source>
</evidence>
<comment type="function">
    <text evidence="1">Stimulates guanine exchange activity of SOS1. May play a role in membrane ruffling and remodeling of the actin cytoskeleton (By similarity).</text>
</comment>
<comment type="subunit">
    <text evidence="1">Interacts with ABI1. Part of a complex that contains SOS1, ABI1 and EPS8L2. Associates with F-actin (By similarity).</text>
</comment>
<comment type="subcellular location">
    <subcellularLocation>
        <location evidence="1">Cytoplasm</location>
    </subcellularLocation>
</comment>
<comment type="tissue specificity">
    <text evidence="5">Detected in placenta, skin, mammary gland, bone marrow and stomach.</text>
</comment>
<comment type="similarity">
    <text evidence="6">Belongs to the EPS8 family.</text>
</comment>
<comment type="sequence caution" evidence="6">
    <conflict type="frameshift">
        <sequence resource="EMBL" id="BC027043"/>
    </conflict>
</comment>
<gene>
    <name type="primary">Eps8l1</name>
    <name type="synonym">Eps8r1</name>
</gene>
<name>ES8L1_MOUSE</name>